<accession>P00155</accession>
<sequence>MQTRNAFSWIKKEITRSISVLLMIYIITRAPISNAYPIFAQQGYENPREATGRIVCANCHLANKPVDIEVPQAVLPDTVFEAVVRIPYDMQVKQVLANGKKGALNVGAVLILPEGFELAPPHRLSPQIKEKIGNLSFQSYRPTKKNILVIGPVPGKKYSEITFPILSPDPATKRDVYFLKYPLYVGGNRGRGQIYPDGSKSNNNVSNATATGVVKQIIRKEKGGYEITIVDASDGSEVIDIIPPGPELLVSEGESIKLDQPLTSNPNVGGFGQGDAEIVLQDPLRVQGLLLFLASIILAQILLVLKKKQFEKVQLSEMNF</sequence>
<proteinExistence type="inferred from homology"/>
<protein>
    <recommendedName>
        <fullName>Cytochrome f</fullName>
    </recommendedName>
</protein>
<keyword id="KW-0150">Chloroplast</keyword>
<keyword id="KW-0249">Electron transport</keyword>
<keyword id="KW-0349">Heme</keyword>
<keyword id="KW-0408">Iron</keyword>
<keyword id="KW-0472">Membrane</keyword>
<keyword id="KW-0479">Metal-binding</keyword>
<keyword id="KW-0602">Photosynthesis</keyword>
<keyword id="KW-0934">Plastid</keyword>
<keyword id="KW-0732">Signal</keyword>
<keyword id="KW-0793">Thylakoid</keyword>
<keyword id="KW-0812">Transmembrane</keyword>
<keyword id="KW-1133">Transmembrane helix</keyword>
<keyword id="KW-0813">Transport</keyword>
<geneLocation type="chloroplast"/>
<evidence type="ECO:0000250" key="1"/>
<evidence type="ECO:0000255" key="2"/>
<evidence type="ECO:0000305" key="3"/>
<name>CYF_PEA</name>
<gene>
    <name type="primary">petA</name>
</gene>
<comment type="function">
    <text evidence="1">Component of the cytochrome b6-f complex, which mediates electron transfer between photosystem II (PSII) and photosystem I (PSI), cyclic electron flow around PSI, and state transitions.</text>
</comment>
<comment type="cofactor">
    <cofactor evidence="1">
        <name>heme</name>
        <dbReference type="ChEBI" id="CHEBI:30413"/>
    </cofactor>
    <text evidence="1">Binds 1 heme group covalently.</text>
</comment>
<comment type="subunit">
    <text evidence="1">The 4 large subunits of the cytochrome b6-f complex are cytochrome b6, subunit IV (17 kDa polypeptide, petD), cytochrome f and the Rieske protein, while the 4 small subunits are PetG, PetL, PetM and PetN. The complex functions as a dimer (By similarity).</text>
</comment>
<comment type="subcellular location">
    <subcellularLocation>
        <location evidence="1">Plastid</location>
        <location evidence="1">Chloroplast thylakoid membrane</location>
        <topology evidence="1">Single-pass membrane protein</topology>
    </subcellularLocation>
</comment>
<comment type="similarity">
    <text evidence="3">Belongs to the cytochrome f family.</text>
</comment>
<comment type="sequence caution" evidence="3">
    <conflict type="erroneous initiation">
        <sequence resource="EMBL-CDS" id="AAA85363"/>
    </conflict>
</comment>
<comment type="sequence caution" evidence="3">
    <conflict type="erroneous initiation">
        <sequence resource="EMBL-CDS" id="CAA39759"/>
    </conflict>
</comment>
<dbReference type="EMBL" id="K01516">
    <property type="protein sequence ID" value="AAA85363.1"/>
    <property type="status" value="ALT_INIT"/>
    <property type="molecule type" value="Genomic_DNA"/>
</dbReference>
<dbReference type="EMBL" id="X56315">
    <property type="protein sequence ID" value="CAA39759.1"/>
    <property type="status" value="ALT_INIT"/>
    <property type="molecule type" value="Genomic_DNA"/>
</dbReference>
<dbReference type="EMBL" id="X53525">
    <property type="protein sequence ID" value="CAA37603.1"/>
    <property type="molecule type" value="Genomic_DNA"/>
</dbReference>
<dbReference type="EMBL" id="X15767">
    <property type="protein sequence ID" value="CAA33776.1"/>
    <property type="molecule type" value="Genomic_DNA"/>
</dbReference>
<dbReference type="PIR" id="A00148">
    <property type="entry name" value="CFPM"/>
</dbReference>
<dbReference type="RefSeq" id="YP_003587555.1">
    <property type="nucleotide sequence ID" value="NC_014057.1"/>
</dbReference>
<dbReference type="SMR" id="P00155"/>
<dbReference type="GeneID" id="9073103"/>
<dbReference type="GO" id="GO:0009535">
    <property type="term" value="C:chloroplast thylakoid membrane"/>
    <property type="evidence" value="ECO:0007669"/>
    <property type="project" value="UniProtKB-SubCell"/>
</dbReference>
<dbReference type="GO" id="GO:0009055">
    <property type="term" value="F:electron transfer activity"/>
    <property type="evidence" value="ECO:0007669"/>
    <property type="project" value="UniProtKB-UniRule"/>
</dbReference>
<dbReference type="GO" id="GO:0020037">
    <property type="term" value="F:heme binding"/>
    <property type="evidence" value="ECO:0007669"/>
    <property type="project" value="InterPro"/>
</dbReference>
<dbReference type="GO" id="GO:0005506">
    <property type="term" value="F:iron ion binding"/>
    <property type="evidence" value="ECO:0007669"/>
    <property type="project" value="InterPro"/>
</dbReference>
<dbReference type="GO" id="GO:0015979">
    <property type="term" value="P:photosynthesis"/>
    <property type="evidence" value="ECO:0007669"/>
    <property type="project" value="UniProtKB-UniRule"/>
</dbReference>
<dbReference type="FunFam" id="1.20.5.700:FF:000001">
    <property type="entry name" value="Cytochrome f"/>
    <property type="match status" value="1"/>
</dbReference>
<dbReference type="FunFam" id="2.40.50.100:FF:000007">
    <property type="entry name" value="Cytochrome f"/>
    <property type="match status" value="1"/>
</dbReference>
<dbReference type="FunFam" id="2.60.40.830:FF:000001">
    <property type="entry name" value="Cytochrome f"/>
    <property type="match status" value="1"/>
</dbReference>
<dbReference type="Gene3D" id="2.40.50.100">
    <property type="match status" value="1"/>
</dbReference>
<dbReference type="Gene3D" id="2.60.40.830">
    <property type="entry name" value="Cytochrome f large domain"/>
    <property type="match status" value="1"/>
</dbReference>
<dbReference type="Gene3D" id="1.20.5.700">
    <property type="entry name" value="Single helix bin"/>
    <property type="match status" value="1"/>
</dbReference>
<dbReference type="HAMAP" id="MF_00610">
    <property type="entry name" value="Cytb6_f_cytF"/>
    <property type="match status" value="1"/>
</dbReference>
<dbReference type="InterPro" id="IPR024058">
    <property type="entry name" value="Cyt-f_TM"/>
</dbReference>
<dbReference type="InterPro" id="IPR002325">
    <property type="entry name" value="Cyt_f"/>
</dbReference>
<dbReference type="InterPro" id="IPR024094">
    <property type="entry name" value="Cyt_f_lg_dom"/>
</dbReference>
<dbReference type="InterPro" id="IPR036826">
    <property type="entry name" value="Cyt_f_lg_dom_sf"/>
</dbReference>
<dbReference type="InterPro" id="IPR011054">
    <property type="entry name" value="Rudment_hybrid_motif"/>
</dbReference>
<dbReference type="PANTHER" id="PTHR33288">
    <property type="match status" value="1"/>
</dbReference>
<dbReference type="PANTHER" id="PTHR33288:SF10">
    <property type="entry name" value="CYTOCHROME F"/>
    <property type="match status" value="1"/>
</dbReference>
<dbReference type="Pfam" id="PF01333">
    <property type="entry name" value="Apocytochr_F_C"/>
    <property type="match status" value="1"/>
</dbReference>
<dbReference type="Pfam" id="PF16639">
    <property type="entry name" value="Apocytochr_F_N"/>
    <property type="match status" value="1"/>
</dbReference>
<dbReference type="PRINTS" id="PR00610">
    <property type="entry name" value="CYTOCHROMEF"/>
</dbReference>
<dbReference type="SUPFAM" id="SSF103431">
    <property type="entry name" value="Cytochrome f subunit of the cytochrome b6f complex, transmembrane anchor"/>
    <property type="match status" value="1"/>
</dbReference>
<dbReference type="SUPFAM" id="SSF49441">
    <property type="entry name" value="Cytochrome f, large domain"/>
    <property type="match status" value="1"/>
</dbReference>
<dbReference type="SUPFAM" id="SSF51246">
    <property type="entry name" value="Rudiment single hybrid motif"/>
    <property type="match status" value="1"/>
</dbReference>
<dbReference type="PROSITE" id="PS51010">
    <property type="entry name" value="CYTF"/>
    <property type="match status" value="1"/>
</dbReference>
<organism>
    <name type="scientific">Pisum sativum</name>
    <name type="common">Garden pea</name>
    <name type="synonym">Lathyrus oleraceus</name>
    <dbReference type="NCBI Taxonomy" id="3888"/>
    <lineage>
        <taxon>Eukaryota</taxon>
        <taxon>Viridiplantae</taxon>
        <taxon>Streptophyta</taxon>
        <taxon>Embryophyta</taxon>
        <taxon>Tracheophyta</taxon>
        <taxon>Spermatophyta</taxon>
        <taxon>Magnoliopsida</taxon>
        <taxon>eudicotyledons</taxon>
        <taxon>Gunneridae</taxon>
        <taxon>Pentapetalae</taxon>
        <taxon>rosids</taxon>
        <taxon>fabids</taxon>
        <taxon>Fabales</taxon>
        <taxon>Fabaceae</taxon>
        <taxon>Papilionoideae</taxon>
        <taxon>50 kb inversion clade</taxon>
        <taxon>NPAAA clade</taxon>
        <taxon>Hologalegina</taxon>
        <taxon>IRL clade</taxon>
        <taxon>Fabeae</taxon>
        <taxon>Pisum</taxon>
    </lineage>
</organism>
<reference key="1">
    <citation type="journal article" date="1984" name="Cell">
        <title>Structure and topology of cytochrome f in pea chloroplast membranes.</title>
        <authorList>
            <person name="Willey D.L."/>
            <person name="Auffret A.D."/>
            <person name="Gray J.C."/>
        </authorList>
    </citation>
    <scope>NUCLEOTIDE SEQUENCE [GENOMIC DNA]</scope>
</reference>
<reference key="2">
    <citation type="journal article" date="1991" name="Curr. Genet.">
        <title>Sequence and transcriptional analysis of the gene cluster trnQ-zfpA-psaI-ORF231-petA in pea chloroplasts.</title>
        <authorList>
            <person name="Nagano Y."/>
            <person name="Matsuno R."/>
            <person name="Sasaki Y."/>
        </authorList>
    </citation>
    <scope>NUCLEOTIDE SEQUENCE [GENOMIC DNA] OF 1-169</scope>
    <source>
        <strain>cv. Alaska</strain>
    </source>
</reference>
<reference key="3">
    <citation type="journal article" date="1990" name="Plant Mol. Biol.">
        <title>An open reading frame encoding a putative haem-binding polypeptide is cotranscribed with the pea chloroplast gene for apocytochrome f.</title>
        <authorList>
            <person name="Willey D.L."/>
            <person name="Gray J.C."/>
        </authorList>
    </citation>
    <scope>NUCLEOTIDE SEQUENCE [GENOMIC DNA] OF 1-10</scope>
</reference>
<reference key="4">
    <citation type="journal article" date="1989" name="Curr. Genet.">
        <title>Two small open reading frames are co-transcribed with the pea chloroplast genes for the polypeptides of cytochrome b-559.</title>
        <authorList>
            <person name="Willey D.L."/>
            <person name="Gray J.C."/>
        </authorList>
    </citation>
    <scope>NUCLEOTIDE SEQUENCE [GENOMIC DNA] OF 308-320</scope>
    <source>
        <tissue>Shoot</tissue>
    </source>
</reference>
<feature type="signal peptide" evidence="1">
    <location>
        <begin position="1"/>
        <end position="35"/>
    </location>
</feature>
<feature type="chain" id="PRO_0000023828" description="Cytochrome f">
    <location>
        <begin position="36"/>
        <end position="320"/>
    </location>
</feature>
<feature type="transmembrane region" description="Helical" evidence="2">
    <location>
        <begin position="286"/>
        <end position="305"/>
    </location>
</feature>
<feature type="binding site" description="axial binding residue" evidence="1">
    <location>
        <position position="36"/>
    </location>
    <ligand>
        <name>heme</name>
        <dbReference type="ChEBI" id="CHEBI:30413"/>
    </ligand>
    <ligandPart>
        <name>Fe</name>
        <dbReference type="ChEBI" id="CHEBI:18248"/>
    </ligandPart>
</feature>
<feature type="binding site" description="covalent" evidence="1">
    <location>
        <position position="56"/>
    </location>
    <ligand>
        <name>heme</name>
        <dbReference type="ChEBI" id="CHEBI:30413"/>
    </ligand>
</feature>
<feature type="binding site" description="covalent" evidence="1">
    <location>
        <position position="59"/>
    </location>
    <ligand>
        <name>heme</name>
        <dbReference type="ChEBI" id="CHEBI:30413"/>
    </ligand>
</feature>
<feature type="binding site" description="axial binding residue" evidence="1">
    <location>
        <position position="60"/>
    </location>
    <ligand>
        <name>heme</name>
        <dbReference type="ChEBI" id="CHEBI:30413"/>
    </ligand>
    <ligandPart>
        <name>Fe</name>
        <dbReference type="ChEBI" id="CHEBI:18248"/>
    </ligandPart>
</feature>